<accession>A7H1L7</accession>
<protein>
    <recommendedName>
        <fullName evidence="1">Ribosome maturation factor RimP</fullName>
    </recommendedName>
</protein>
<comment type="function">
    <text evidence="1">Required for maturation of 30S ribosomal subunits.</text>
</comment>
<comment type="subcellular location">
    <subcellularLocation>
        <location evidence="1">Cytoplasm</location>
    </subcellularLocation>
</comment>
<comment type="similarity">
    <text evidence="1">Belongs to the RimP family.</text>
</comment>
<organism>
    <name type="scientific">Campylobacter jejuni subsp. doylei (strain ATCC BAA-1458 / RM4099 / 269.97)</name>
    <dbReference type="NCBI Taxonomy" id="360109"/>
    <lineage>
        <taxon>Bacteria</taxon>
        <taxon>Pseudomonadati</taxon>
        <taxon>Campylobacterota</taxon>
        <taxon>Epsilonproteobacteria</taxon>
        <taxon>Campylobacterales</taxon>
        <taxon>Campylobacteraceae</taxon>
        <taxon>Campylobacter</taxon>
    </lineage>
</organism>
<gene>
    <name evidence="1" type="primary">rimP</name>
    <name type="ordered locus">JJD26997_0151</name>
</gene>
<proteinExistence type="inferred from homology"/>
<feature type="chain" id="PRO_1000064699" description="Ribosome maturation factor RimP">
    <location>
        <begin position="1"/>
        <end position="140"/>
    </location>
</feature>
<evidence type="ECO:0000255" key="1">
    <source>
        <dbReference type="HAMAP-Rule" id="MF_01077"/>
    </source>
</evidence>
<reference key="1">
    <citation type="submission" date="2007-07" db="EMBL/GenBank/DDBJ databases">
        <title>Complete genome sequence of Campylobacter jejuni subsp doylei 269.97 isolated from human blood.</title>
        <authorList>
            <person name="Fouts D.E."/>
            <person name="Mongodin E.F."/>
            <person name="Puiu D."/>
            <person name="Sebastian Y."/>
            <person name="Miller W.G."/>
            <person name="Mandrell R.E."/>
            <person name="Lastovica A.J."/>
            <person name="Nelson K.E."/>
        </authorList>
    </citation>
    <scope>NUCLEOTIDE SEQUENCE [LARGE SCALE GENOMIC DNA]</scope>
    <source>
        <strain>ATCC BAA-1458 / RM4099 / 269.97</strain>
    </source>
</reference>
<name>RIMP_CAMJD</name>
<keyword id="KW-0963">Cytoplasm</keyword>
<keyword id="KW-0690">Ribosome biogenesis</keyword>
<dbReference type="EMBL" id="CP000768">
    <property type="protein sequence ID" value="ABS44495.1"/>
    <property type="molecule type" value="Genomic_DNA"/>
</dbReference>
<dbReference type="SMR" id="A7H1L7"/>
<dbReference type="KEGG" id="cjd:JJD26997_0151"/>
<dbReference type="HOGENOM" id="CLU_070525_2_2_7"/>
<dbReference type="Proteomes" id="UP000002302">
    <property type="component" value="Chromosome"/>
</dbReference>
<dbReference type="GO" id="GO:0005829">
    <property type="term" value="C:cytosol"/>
    <property type="evidence" value="ECO:0007669"/>
    <property type="project" value="TreeGrafter"/>
</dbReference>
<dbReference type="GO" id="GO:0000028">
    <property type="term" value="P:ribosomal small subunit assembly"/>
    <property type="evidence" value="ECO:0007669"/>
    <property type="project" value="TreeGrafter"/>
</dbReference>
<dbReference type="GO" id="GO:0006412">
    <property type="term" value="P:translation"/>
    <property type="evidence" value="ECO:0007669"/>
    <property type="project" value="TreeGrafter"/>
</dbReference>
<dbReference type="CDD" id="cd01734">
    <property type="entry name" value="YlxS_C"/>
    <property type="match status" value="1"/>
</dbReference>
<dbReference type="Gene3D" id="2.30.30.180">
    <property type="entry name" value="Ribosome maturation factor RimP, C-terminal domain"/>
    <property type="match status" value="1"/>
</dbReference>
<dbReference type="Gene3D" id="3.30.300.70">
    <property type="entry name" value="RimP-like superfamily, N-terminal"/>
    <property type="match status" value="1"/>
</dbReference>
<dbReference type="HAMAP" id="MF_01077">
    <property type="entry name" value="RimP"/>
    <property type="match status" value="1"/>
</dbReference>
<dbReference type="InterPro" id="IPR003728">
    <property type="entry name" value="Ribosome_maturation_RimP"/>
</dbReference>
<dbReference type="InterPro" id="IPR028998">
    <property type="entry name" value="RimP_C"/>
</dbReference>
<dbReference type="InterPro" id="IPR036847">
    <property type="entry name" value="RimP_C_sf"/>
</dbReference>
<dbReference type="InterPro" id="IPR028989">
    <property type="entry name" value="RimP_N"/>
</dbReference>
<dbReference type="InterPro" id="IPR035956">
    <property type="entry name" value="RimP_N_sf"/>
</dbReference>
<dbReference type="NCBIfam" id="NF011232">
    <property type="entry name" value="PRK14639.1"/>
    <property type="match status" value="1"/>
</dbReference>
<dbReference type="PANTHER" id="PTHR33867">
    <property type="entry name" value="RIBOSOME MATURATION FACTOR RIMP"/>
    <property type="match status" value="1"/>
</dbReference>
<dbReference type="PANTHER" id="PTHR33867:SF1">
    <property type="entry name" value="RIBOSOME MATURATION FACTOR RIMP"/>
    <property type="match status" value="1"/>
</dbReference>
<dbReference type="Pfam" id="PF17384">
    <property type="entry name" value="DUF150_C"/>
    <property type="match status" value="1"/>
</dbReference>
<dbReference type="Pfam" id="PF02576">
    <property type="entry name" value="RimP_N"/>
    <property type="match status" value="1"/>
</dbReference>
<dbReference type="SUPFAM" id="SSF74942">
    <property type="entry name" value="YhbC-like, C-terminal domain"/>
    <property type="match status" value="1"/>
</dbReference>
<dbReference type="SUPFAM" id="SSF75420">
    <property type="entry name" value="YhbC-like, N-terminal domain"/>
    <property type="match status" value="1"/>
</dbReference>
<sequence>MNLEALCKEAELSFYDDELVSENGKKIYRIYVQKEGGVNLDDCARLSEILSPIFDVEPPVNGEYFLEVSSPGLERKLSKIEHFAKSIGELVKITTNEKEKIEAKIIAVDDENITLENLENKEKTTINFNDIKKARTFMEW</sequence>